<comment type="catalytic activity">
    <reaction evidence="1">
        <text>urea + 2 H2O + H(+) = hydrogencarbonate + 2 NH4(+)</text>
        <dbReference type="Rhea" id="RHEA:20557"/>
        <dbReference type="ChEBI" id="CHEBI:15377"/>
        <dbReference type="ChEBI" id="CHEBI:15378"/>
        <dbReference type="ChEBI" id="CHEBI:16199"/>
        <dbReference type="ChEBI" id="CHEBI:17544"/>
        <dbReference type="ChEBI" id="CHEBI:28938"/>
        <dbReference type="EC" id="3.5.1.5"/>
    </reaction>
</comment>
<comment type="pathway">
    <text evidence="1">Nitrogen metabolism; urea degradation; CO(2) and NH(3) from urea (urease route): step 1/1.</text>
</comment>
<comment type="subunit">
    <text evidence="1">Heterotrimer of UreA (gamma), UreB (beta) and UreC (alpha) subunits. Three heterotrimers associate to form the active enzyme.</text>
</comment>
<comment type="subcellular location">
    <subcellularLocation>
        <location evidence="1">Cytoplasm</location>
    </subcellularLocation>
</comment>
<comment type="similarity">
    <text evidence="1">Belongs to the urease beta subunit family.</text>
</comment>
<sequence>MSNFIPGEIIPEKGEIELNLGKEIRTVTVSNSGDRPVQVGSHYHFFEANKALIFDRKITFGMRLNIPAGTAIRFEPGDTTDVKLVPFSGLRNVYGFNSLVNGSLDN</sequence>
<keyword id="KW-0963">Cytoplasm</keyword>
<keyword id="KW-0378">Hydrolase</keyword>
<reference key="1">
    <citation type="journal article" date="2007" name="PLoS Genet.">
        <title>Patterns and implications of gene gain and loss in the evolution of Prochlorococcus.</title>
        <authorList>
            <person name="Kettler G.C."/>
            <person name="Martiny A.C."/>
            <person name="Huang K."/>
            <person name="Zucker J."/>
            <person name="Coleman M.L."/>
            <person name="Rodrigue S."/>
            <person name="Chen F."/>
            <person name="Lapidus A."/>
            <person name="Ferriera S."/>
            <person name="Johnson J."/>
            <person name="Steglich C."/>
            <person name="Church G.M."/>
            <person name="Richardson P."/>
            <person name="Chisholm S.W."/>
        </authorList>
    </citation>
    <scope>NUCLEOTIDE SEQUENCE [LARGE SCALE GENOMIC DNA]</scope>
    <source>
        <strain>MIT 9215</strain>
    </source>
</reference>
<accession>A8G4K8</accession>
<feature type="chain" id="PRO_1000070755" description="Urease subunit beta">
    <location>
        <begin position="1"/>
        <end position="106"/>
    </location>
</feature>
<name>URE2_PROM2</name>
<organism>
    <name type="scientific">Prochlorococcus marinus (strain MIT 9215)</name>
    <dbReference type="NCBI Taxonomy" id="93060"/>
    <lineage>
        <taxon>Bacteria</taxon>
        <taxon>Bacillati</taxon>
        <taxon>Cyanobacteriota</taxon>
        <taxon>Cyanophyceae</taxon>
        <taxon>Synechococcales</taxon>
        <taxon>Prochlorococcaceae</taxon>
        <taxon>Prochlorococcus</taxon>
    </lineage>
</organism>
<gene>
    <name evidence="1" type="primary">ureB</name>
    <name type="ordered locus">P9215_09241</name>
</gene>
<protein>
    <recommendedName>
        <fullName evidence="1">Urease subunit beta</fullName>
        <ecNumber evidence="1">3.5.1.5</ecNumber>
    </recommendedName>
    <alternativeName>
        <fullName evidence="1">Urea amidohydrolase subunit beta</fullName>
    </alternativeName>
</protein>
<evidence type="ECO:0000255" key="1">
    <source>
        <dbReference type="HAMAP-Rule" id="MF_01954"/>
    </source>
</evidence>
<dbReference type="EC" id="3.5.1.5" evidence="1"/>
<dbReference type="EMBL" id="CP000825">
    <property type="protein sequence ID" value="ABV50539.1"/>
    <property type="molecule type" value="Genomic_DNA"/>
</dbReference>
<dbReference type="RefSeq" id="WP_012007634.1">
    <property type="nucleotide sequence ID" value="NC_009840.1"/>
</dbReference>
<dbReference type="SMR" id="A8G4K8"/>
<dbReference type="STRING" id="93060.P9215_09241"/>
<dbReference type="KEGG" id="pmh:P9215_09241"/>
<dbReference type="eggNOG" id="COG0832">
    <property type="taxonomic scope" value="Bacteria"/>
</dbReference>
<dbReference type="HOGENOM" id="CLU_129707_1_1_3"/>
<dbReference type="OrthoDB" id="9797217at2"/>
<dbReference type="UniPathway" id="UPA00258">
    <property type="reaction ID" value="UER00370"/>
</dbReference>
<dbReference type="Proteomes" id="UP000002014">
    <property type="component" value="Chromosome"/>
</dbReference>
<dbReference type="GO" id="GO:0035550">
    <property type="term" value="C:urease complex"/>
    <property type="evidence" value="ECO:0007669"/>
    <property type="project" value="InterPro"/>
</dbReference>
<dbReference type="GO" id="GO:0009039">
    <property type="term" value="F:urease activity"/>
    <property type="evidence" value="ECO:0007669"/>
    <property type="project" value="UniProtKB-UniRule"/>
</dbReference>
<dbReference type="GO" id="GO:0043419">
    <property type="term" value="P:urea catabolic process"/>
    <property type="evidence" value="ECO:0007669"/>
    <property type="project" value="UniProtKB-UniRule"/>
</dbReference>
<dbReference type="CDD" id="cd00407">
    <property type="entry name" value="Urease_beta"/>
    <property type="match status" value="1"/>
</dbReference>
<dbReference type="FunFam" id="2.10.150.10:FF:000001">
    <property type="entry name" value="Urease subunit beta"/>
    <property type="match status" value="1"/>
</dbReference>
<dbReference type="Gene3D" id="2.10.150.10">
    <property type="entry name" value="Urease, beta subunit"/>
    <property type="match status" value="1"/>
</dbReference>
<dbReference type="HAMAP" id="MF_01954">
    <property type="entry name" value="Urease_beta"/>
    <property type="match status" value="1"/>
</dbReference>
<dbReference type="InterPro" id="IPR002019">
    <property type="entry name" value="Urease_beta-like"/>
</dbReference>
<dbReference type="InterPro" id="IPR036461">
    <property type="entry name" value="Urease_betasu_sf"/>
</dbReference>
<dbReference type="InterPro" id="IPR050069">
    <property type="entry name" value="Urease_subunit"/>
</dbReference>
<dbReference type="NCBIfam" id="NF009682">
    <property type="entry name" value="PRK13203.1"/>
    <property type="match status" value="1"/>
</dbReference>
<dbReference type="NCBIfam" id="TIGR00192">
    <property type="entry name" value="urease_beta"/>
    <property type="match status" value="1"/>
</dbReference>
<dbReference type="PANTHER" id="PTHR33569">
    <property type="entry name" value="UREASE"/>
    <property type="match status" value="1"/>
</dbReference>
<dbReference type="PANTHER" id="PTHR33569:SF1">
    <property type="entry name" value="UREASE"/>
    <property type="match status" value="1"/>
</dbReference>
<dbReference type="Pfam" id="PF00699">
    <property type="entry name" value="Urease_beta"/>
    <property type="match status" value="1"/>
</dbReference>
<dbReference type="SUPFAM" id="SSF51278">
    <property type="entry name" value="Urease, beta-subunit"/>
    <property type="match status" value="1"/>
</dbReference>
<proteinExistence type="inferred from homology"/>